<evidence type="ECO:0000250" key="1">
    <source>
        <dbReference type="UniProtKB" id="P01116"/>
    </source>
</evidence>
<evidence type="ECO:0000250" key="2">
    <source>
        <dbReference type="UniProtKB" id="Q96A58"/>
    </source>
</evidence>
<evidence type="ECO:0000255" key="3"/>
<evidence type="ECO:0000256" key="4">
    <source>
        <dbReference type="SAM" id="MobiDB-lite"/>
    </source>
</evidence>
<evidence type="ECO:0000312" key="5">
    <source>
        <dbReference type="EMBL" id="AAI42346.1"/>
    </source>
</evidence>
<evidence type="ECO:0000312" key="6">
    <source>
        <dbReference type="EMBL" id="AAX08944.1"/>
    </source>
</evidence>
<organism>
    <name type="scientific">Bos taurus</name>
    <name type="common">Bovine</name>
    <dbReference type="NCBI Taxonomy" id="9913"/>
    <lineage>
        <taxon>Eukaryota</taxon>
        <taxon>Metazoa</taxon>
        <taxon>Chordata</taxon>
        <taxon>Craniata</taxon>
        <taxon>Vertebrata</taxon>
        <taxon>Euteleostomi</taxon>
        <taxon>Mammalia</taxon>
        <taxon>Eutheria</taxon>
        <taxon>Laurasiatheria</taxon>
        <taxon>Artiodactyla</taxon>
        <taxon>Ruminantia</taxon>
        <taxon>Pecora</taxon>
        <taxon>Bovidae</taxon>
        <taxon>Bovinae</taxon>
        <taxon>Bos</taxon>
    </lineage>
</organism>
<proteinExistence type="evidence at transcript level"/>
<protein>
    <recommendedName>
        <fullName>Ras-like protein family member 11B</fullName>
        <ecNumber evidence="1">3.6.5.2</ecNumber>
    </recommendedName>
</protein>
<comment type="catalytic activity">
    <reaction evidence="1">
        <text>GTP + H2O = GDP + phosphate + H(+)</text>
        <dbReference type="Rhea" id="RHEA:19669"/>
        <dbReference type="ChEBI" id="CHEBI:15377"/>
        <dbReference type="ChEBI" id="CHEBI:15378"/>
        <dbReference type="ChEBI" id="CHEBI:37565"/>
        <dbReference type="ChEBI" id="CHEBI:43474"/>
        <dbReference type="ChEBI" id="CHEBI:58189"/>
        <dbReference type="EC" id="3.6.5.2"/>
    </reaction>
</comment>
<comment type="similarity">
    <text evidence="3">Belongs to the small GTPase superfamily. Ras family.</text>
</comment>
<feature type="chain" id="PRO_0000308364" description="Ras-like protein family member 11B">
    <location>
        <begin position="1"/>
        <end position="248"/>
    </location>
</feature>
<feature type="region of interest" description="Small GTPase-like">
    <location>
        <begin position="29"/>
        <end position="246"/>
    </location>
</feature>
<feature type="region of interest" description="Disordered" evidence="4">
    <location>
        <begin position="205"/>
        <end position="229"/>
    </location>
</feature>
<feature type="binding site" evidence="2">
    <location>
        <begin position="40"/>
        <end position="47"/>
    </location>
    <ligand>
        <name>GTP</name>
        <dbReference type="ChEBI" id="CHEBI:37565"/>
    </ligand>
</feature>
<feature type="binding site" evidence="2">
    <location>
        <begin position="87"/>
        <end position="91"/>
    </location>
    <ligand>
        <name>GTP</name>
        <dbReference type="ChEBI" id="CHEBI:37565"/>
    </ligand>
</feature>
<feature type="binding site" evidence="2">
    <location>
        <begin position="152"/>
        <end position="155"/>
    </location>
    <ligand>
        <name>GTP</name>
        <dbReference type="ChEBI" id="CHEBI:37565"/>
    </ligand>
</feature>
<dbReference type="EC" id="3.6.5.2" evidence="1"/>
<dbReference type="EMBL" id="BT020927">
    <property type="protein sequence ID" value="AAX08944.1"/>
    <property type="molecule type" value="mRNA"/>
</dbReference>
<dbReference type="EMBL" id="BT029844">
    <property type="protein sequence ID" value="ABM21552.1"/>
    <property type="molecule type" value="mRNA"/>
</dbReference>
<dbReference type="EMBL" id="BC142345">
    <property type="protein sequence ID" value="AAI42346.1"/>
    <property type="molecule type" value="mRNA"/>
</dbReference>
<dbReference type="RefSeq" id="NP_001015635.1">
    <property type="nucleotide sequence ID" value="NM_001015635.2"/>
</dbReference>
<dbReference type="SMR" id="Q5E9J3"/>
<dbReference type="FunCoup" id="Q5E9J3">
    <property type="interactions" value="270"/>
</dbReference>
<dbReference type="STRING" id="9913.ENSBTAP00000027515"/>
<dbReference type="PaxDb" id="9913-ENSBTAP00000027515"/>
<dbReference type="Ensembl" id="ENSBTAT00000027515.6">
    <property type="protein sequence ID" value="ENSBTAP00000027515.4"/>
    <property type="gene ID" value="ENSBTAG00000020647.6"/>
</dbReference>
<dbReference type="GeneID" id="528446"/>
<dbReference type="KEGG" id="bta:528446"/>
<dbReference type="CTD" id="65997"/>
<dbReference type="VEuPathDB" id="HostDB:ENSBTAG00000020647"/>
<dbReference type="VGNC" id="VGNC:33755">
    <property type="gene designation" value="RASL11B"/>
</dbReference>
<dbReference type="eggNOG" id="KOG0395">
    <property type="taxonomic scope" value="Eukaryota"/>
</dbReference>
<dbReference type="GeneTree" id="ENSGT00940000158643"/>
<dbReference type="HOGENOM" id="CLU_041217_9_7_1"/>
<dbReference type="InParanoid" id="Q5E9J3"/>
<dbReference type="OMA" id="KEVEPQH"/>
<dbReference type="OrthoDB" id="18798at2759"/>
<dbReference type="TreeFam" id="TF318030"/>
<dbReference type="Proteomes" id="UP000009136">
    <property type="component" value="Chromosome 6"/>
</dbReference>
<dbReference type="Bgee" id="ENSBTAG00000020647">
    <property type="expression patterns" value="Expressed in cumulus cell and 101 other cell types or tissues"/>
</dbReference>
<dbReference type="GO" id="GO:0003925">
    <property type="term" value="F:G protein activity"/>
    <property type="evidence" value="ECO:0007669"/>
    <property type="project" value="UniProtKB-EC"/>
</dbReference>
<dbReference type="GO" id="GO:0005525">
    <property type="term" value="F:GTP binding"/>
    <property type="evidence" value="ECO:0007669"/>
    <property type="project" value="UniProtKB-KW"/>
</dbReference>
<dbReference type="GO" id="GO:0005160">
    <property type="term" value="F:transforming growth factor beta receptor binding"/>
    <property type="evidence" value="ECO:0007669"/>
    <property type="project" value="Ensembl"/>
</dbReference>
<dbReference type="GO" id="GO:0030512">
    <property type="term" value="P:negative regulation of transforming growth factor beta receptor signaling pathway"/>
    <property type="evidence" value="ECO:0007669"/>
    <property type="project" value="Ensembl"/>
</dbReference>
<dbReference type="CDD" id="cd04146">
    <property type="entry name" value="RERG_RasL11_like"/>
    <property type="match status" value="1"/>
</dbReference>
<dbReference type="FunFam" id="3.40.50.300:FF:000718">
    <property type="entry name" value="Ras-like protein family member 11A"/>
    <property type="match status" value="1"/>
</dbReference>
<dbReference type="Gene3D" id="3.40.50.300">
    <property type="entry name" value="P-loop containing nucleotide triphosphate hydrolases"/>
    <property type="match status" value="1"/>
</dbReference>
<dbReference type="InterPro" id="IPR027417">
    <property type="entry name" value="P-loop_NTPase"/>
</dbReference>
<dbReference type="InterPro" id="IPR051065">
    <property type="entry name" value="Ras-related_GTPase"/>
</dbReference>
<dbReference type="InterPro" id="IPR005225">
    <property type="entry name" value="Small_GTP-bd"/>
</dbReference>
<dbReference type="InterPro" id="IPR001806">
    <property type="entry name" value="Small_GTPase"/>
</dbReference>
<dbReference type="NCBIfam" id="TIGR00231">
    <property type="entry name" value="small_GTP"/>
    <property type="match status" value="1"/>
</dbReference>
<dbReference type="PANTHER" id="PTHR45704">
    <property type="entry name" value="RAS-LIKE FAMILY MEMBER 11"/>
    <property type="match status" value="1"/>
</dbReference>
<dbReference type="Pfam" id="PF00071">
    <property type="entry name" value="Ras"/>
    <property type="match status" value="1"/>
</dbReference>
<dbReference type="PRINTS" id="PR00449">
    <property type="entry name" value="RASTRNSFRMNG"/>
</dbReference>
<dbReference type="SMART" id="SM00175">
    <property type="entry name" value="RAB"/>
    <property type="match status" value="1"/>
</dbReference>
<dbReference type="SMART" id="SM00173">
    <property type="entry name" value="RAS"/>
    <property type="match status" value="1"/>
</dbReference>
<dbReference type="SMART" id="SM00174">
    <property type="entry name" value="RHO"/>
    <property type="match status" value="1"/>
</dbReference>
<dbReference type="SUPFAM" id="SSF52540">
    <property type="entry name" value="P-loop containing nucleoside triphosphate hydrolases"/>
    <property type="match status" value="1"/>
</dbReference>
<dbReference type="PROSITE" id="PS51421">
    <property type="entry name" value="RAS"/>
    <property type="match status" value="1"/>
</dbReference>
<keyword id="KW-0342">GTP-binding</keyword>
<keyword id="KW-0378">Hydrolase</keyword>
<keyword id="KW-0547">Nucleotide-binding</keyword>
<keyword id="KW-1185">Reference proteome</keyword>
<accession>Q5E9J3</accession>
<reference evidence="6" key="1">
    <citation type="journal article" date="2005" name="BMC Genomics">
        <title>Characterization of 954 bovine full-CDS cDNA sequences.</title>
        <authorList>
            <person name="Harhay G.P."/>
            <person name="Sonstegard T.S."/>
            <person name="Keele J.W."/>
            <person name="Heaton M.P."/>
            <person name="Clawson M.L."/>
            <person name="Snelling W.M."/>
            <person name="Wiedmann R.T."/>
            <person name="Van Tassell C.P."/>
            <person name="Smith T.P.L."/>
        </authorList>
    </citation>
    <scope>NUCLEOTIDE SEQUENCE [LARGE SCALE MRNA]</scope>
</reference>
<reference evidence="5" key="2">
    <citation type="submission" date="2007-06" db="EMBL/GenBank/DDBJ databases">
        <authorList>
            <consortium name="NIH - Mammalian Gene Collection (MGC) project"/>
        </authorList>
    </citation>
    <scope>NUCLEOTIDE SEQUENCE [LARGE SCALE MRNA]</scope>
    <source>
        <strain evidence="5">Hereford</strain>
        <tissue evidence="5">Fetal medulla</tissue>
    </source>
</reference>
<gene>
    <name evidence="6" type="primary">RASL11B</name>
</gene>
<sequence>MRLIQNMCTIAEYPAPGSAAAADCCLGAAGRRLVKIAVVGASGVGKTALVVRFLTKRFIGDYERNAGNLYTRQVQIEGETLAIQVQDTPGIQVHENGLSCTEQLNRCIRWADAVVIVFSITDYKSYELTSQLHQHVQQLHLGTRLPVVVVANKADLLHIKQVDPQLGLQLASMLGCSFYEVSVSENDNDVYNAFHVLCKEVSHKQQPSGTPEKRRTSLIPRPKSPNMQDLKRRFKQALSAKVRTVTSV</sequence>
<name>RSLBB_BOVIN</name>